<reference key="1">
    <citation type="journal article" date="2010" name="Genome Biol.">
        <title>Structure and dynamics of the pan-genome of Streptococcus pneumoniae and closely related species.</title>
        <authorList>
            <person name="Donati C."/>
            <person name="Hiller N.L."/>
            <person name="Tettelin H."/>
            <person name="Muzzi A."/>
            <person name="Croucher N.J."/>
            <person name="Angiuoli S.V."/>
            <person name="Oggioni M."/>
            <person name="Dunning Hotopp J.C."/>
            <person name="Hu F.Z."/>
            <person name="Riley D.R."/>
            <person name="Covacci A."/>
            <person name="Mitchell T.J."/>
            <person name="Bentley S.D."/>
            <person name="Kilian M."/>
            <person name="Ehrlich G.D."/>
            <person name="Rappuoli R."/>
            <person name="Moxon E.R."/>
            <person name="Masignani V."/>
        </authorList>
    </citation>
    <scope>NUCLEOTIDE SEQUENCE [LARGE SCALE GENOMIC DNA]</scope>
    <source>
        <strain>P1031</strain>
    </source>
</reference>
<proteinExistence type="inferred from homology"/>
<protein>
    <recommendedName>
        <fullName evidence="1">Aspartate--ammonia ligase</fullName>
        <ecNumber evidence="1">6.3.1.1</ecNumber>
    </recommendedName>
    <alternativeName>
        <fullName evidence="1">Asparagine synthetase A</fullName>
    </alternativeName>
</protein>
<sequence>MKKSFIHQQEEISFVKNTFTQYLKDKLEVVEVQGPILSKVGDGMQDNLSGVENPVSVKVLQIPDATYEVVHSLAKWKRHTLARFGFGEGEGLFVHMKALRPDEDSLDATHSVYVDQWDWEKVIPNGKRNIVYLKETVEKIYKAIRLTELAVEARYDIESILPKQITFIHTEELVERYPDLTPKERENAICKEFGAVFLIGIGGELPDGKPHDGRAPDYDDWTSESENGYKGLNGDILVWNESLGGAFELSSMGIRVDEETLRRQVEITGDEDRLELEWHKSLLNGLFPLTIGGGIGQSRMAMFLLRKRHIGEVQTSVWPQEVRDTYENIL</sequence>
<accession>C1CMR7</accession>
<name>ASNA_STRZP</name>
<dbReference type="EC" id="6.3.1.1" evidence="1"/>
<dbReference type="EMBL" id="CP000920">
    <property type="protein sequence ID" value="ACO21459.1"/>
    <property type="molecule type" value="Genomic_DNA"/>
</dbReference>
<dbReference type="RefSeq" id="WP_000747993.1">
    <property type="nucleotide sequence ID" value="NC_012467.1"/>
</dbReference>
<dbReference type="SMR" id="C1CMR7"/>
<dbReference type="GeneID" id="45652817"/>
<dbReference type="KEGG" id="spp:SPP_1991"/>
<dbReference type="HOGENOM" id="CLU_071543_0_0_9"/>
<dbReference type="UniPathway" id="UPA00134">
    <property type="reaction ID" value="UER00194"/>
</dbReference>
<dbReference type="GO" id="GO:0005829">
    <property type="term" value="C:cytosol"/>
    <property type="evidence" value="ECO:0007669"/>
    <property type="project" value="TreeGrafter"/>
</dbReference>
<dbReference type="GO" id="GO:0004071">
    <property type="term" value="F:aspartate-ammonia ligase activity"/>
    <property type="evidence" value="ECO:0007669"/>
    <property type="project" value="UniProtKB-UniRule"/>
</dbReference>
<dbReference type="GO" id="GO:0005524">
    <property type="term" value="F:ATP binding"/>
    <property type="evidence" value="ECO:0007669"/>
    <property type="project" value="UniProtKB-UniRule"/>
</dbReference>
<dbReference type="GO" id="GO:0140096">
    <property type="term" value="F:catalytic activity, acting on a protein"/>
    <property type="evidence" value="ECO:0007669"/>
    <property type="project" value="UniProtKB-ARBA"/>
</dbReference>
<dbReference type="GO" id="GO:0016740">
    <property type="term" value="F:transferase activity"/>
    <property type="evidence" value="ECO:0007669"/>
    <property type="project" value="UniProtKB-ARBA"/>
</dbReference>
<dbReference type="GO" id="GO:0070981">
    <property type="term" value="P:L-asparagine biosynthetic process"/>
    <property type="evidence" value="ECO:0007669"/>
    <property type="project" value="UniProtKB-UniRule"/>
</dbReference>
<dbReference type="CDD" id="cd00645">
    <property type="entry name" value="AsnA"/>
    <property type="match status" value="1"/>
</dbReference>
<dbReference type="Gene3D" id="3.30.930.10">
    <property type="entry name" value="Bira Bifunctional Protein, Domain 2"/>
    <property type="match status" value="1"/>
</dbReference>
<dbReference type="HAMAP" id="MF_00555">
    <property type="entry name" value="AsnA"/>
    <property type="match status" value="1"/>
</dbReference>
<dbReference type="InterPro" id="IPR006195">
    <property type="entry name" value="aa-tRNA-synth_II"/>
</dbReference>
<dbReference type="InterPro" id="IPR045864">
    <property type="entry name" value="aa-tRNA-synth_II/BPL/LPL"/>
</dbReference>
<dbReference type="InterPro" id="IPR004618">
    <property type="entry name" value="AsnA"/>
</dbReference>
<dbReference type="NCBIfam" id="TIGR00669">
    <property type="entry name" value="asnA"/>
    <property type="match status" value="1"/>
</dbReference>
<dbReference type="PANTHER" id="PTHR30073">
    <property type="entry name" value="ASPARTATE--AMMONIA LIGASE"/>
    <property type="match status" value="1"/>
</dbReference>
<dbReference type="PANTHER" id="PTHR30073:SF5">
    <property type="entry name" value="ASPARTATE--AMMONIA LIGASE"/>
    <property type="match status" value="1"/>
</dbReference>
<dbReference type="Pfam" id="PF03590">
    <property type="entry name" value="AsnA"/>
    <property type="match status" value="1"/>
</dbReference>
<dbReference type="PIRSF" id="PIRSF001555">
    <property type="entry name" value="Asp_ammon_ligase"/>
    <property type="match status" value="1"/>
</dbReference>
<dbReference type="SUPFAM" id="SSF55681">
    <property type="entry name" value="Class II aaRS and biotin synthetases"/>
    <property type="match status" value="1"/>
</dbReference>
<dbReference type="PROSITE" id="PS50862">
    <property type="entry name" value="AA_TRNA_LIGASE_II"/>
    <property type="match status" value="1"/>
</dbReference>
<keyword id="KW-0028">Amino-acid biosynthesis</keyword>
<keyword id="KW-0061">Asparagine biosynthesis</keyword>
<keyword id="KW-0067">ATP-binding</keyword>
<keyword id="KW-0963">Cytoplasm</keyword>
<keyword id="KW-0436">Ligase</keyword>
<keyword id="KW-0547">Nucleotide-binding</keyword>
<evidence type="ECO:0000255" key="1">
    <source>
        <dbReference type="HAMAP-Rule" id="MF_00555"/>
    </source>
</evidence>
<gene>
    <name evidence="1" type="primary">asnA</name>
    <name type="ordered locus">SPP_1991</name>
</gene>
<organism>
    <name type="scientific">Streptococcus pneumoniae (strain P1031)</name>
    <dbReference type="NCBI Taxonomy" id="488223"/>
    <lineage>
        <taxon>Bacteria</taxon>
        <taxon>Bacillati</taxon>
        <taxon>Bacillota</taxon>
        <taxon>Bacilli</taxon>
        <taxon>Lactobacillales</taxon>
        <taxon>Streptococcaceae</taxon>
        <taxon>Streptococcus</taxon>
    </lineage>
</organism>
<comment type="catalytic activity">
    <reaction evidence="1">
        <text>L-aspartate + NH4(+) + ATP = L-asparagine + AMP + diphosphate + H(+)</text>
        <dbReference type="Rhea" id="RHEA:11372"/>
        <dbReference type="ChEBI" id="CHEBI:15378"/>
        <dbReference type="ChEBI" id="CHEBI:28938"/>
        <dbReference type="ChEBI" id="CHEBI:29991"/>
        <dbReference type="ChEBI" id="CHEBI:30616"/>
        <dbReference type="ChEBI" id="CHEBI:33019"/>
        <dbReference type="ChEBI" id="CHEBI:58048"/>
        <dbReference type="ChEBI" id="CHEBI:456215"/>
        <dbReference type="EC" id="6.3.1.1"/>
    </reaction>
</comment>
<comment type="pathway">
    <text evidence="1">Amino-acid biosynthesis; L-asparagine biosynthesis; L-asparagine from L-aspartate (ammonia route): step 1/1.</text>
</comment>
<comment type="subcellular location">
    <subcellularLocation>
        <location evidence="1">Cytoplasm</location>
    </subcellularLocation>
</comment>
<comment type="similarity">
    <text evidence="1">Belongs to the class-II aminoacyl-tRNA synthetase family. AsnA subfamily.</text>
</comment>
<feature type="chain" id="PRO_1000146702" description="Aspartate--ammonia ligase">
    <location>
        <begin position="1"/>
        <end position="330"/>
    </location>
</feature>